<gene>
    <name evidence="6" type="primary">eutJ</name>
    <name type="ordered locus">STM2462</name>
</gene>
<name>EUTJ_SALTY</name>
<keyword id="KW-0143">Chaperone</keyword>
<keyword id="KW-1185">Reference proteome</keyword>
<sequence>MAHDEQLWLTPRLQKAAALCNQTPAASDTPLWLGVDLGTCDVVSMVVDGNAQPVAVCLDWADVVRDGIVWDFFGAVTLVRRHLDTLEQQLGCRFTHAATSFPPGTDPRISINVLESAGLEVSHVLDEPTAVADLLALDNAGVVDIGGGTTGIAIVKQGKVTYSADEATGGHHISLTLAGNRRIPLEEAEQYKRSNAQEIWPVVKPVYEKMAEIVARHIEGQGIADLWLAGGSCMQPGVEALFRQRFPELQVHLPQHSLFMTPLAIANSGRAKAEGLYAS</sequence>
<feature type="chain" id="PRO_0000087090" description="Ethanolamine utilization protein EutJ">
    <location>
        <begin position="1"/>
        <end position="279"/>
    </location>
</feature>
<comment type="function">
    <text evidence="3 8 9">May protect ethanolamine ammonia-lyase (EAL, eutB-eutC) from inhibition, may function in assembling the bacterial microcompartment and/or in refolding EAL, suggesting it may have chaperone activity (Probable). Overexpression of eutJ and eutS in E.coli leads to multiple BMC-like structures; eutS expression alone leads to 1 BMC-like structure per cell (PubMed:27063436).</text>
</comment>
<comment type="function">
    <text evidence="4 5">Expression of the eut operon allows this bacteria to use ethanolamine (EA) as a carbon, nitrogen and energy source. It relies on cobalamin (vitamin B12) both as a cofactor for the ethanolamine ammonia-lyase (EAL) activity and to induce the operon (PubMed:3045078). EA enhances bacterial survival in macrophages in a concentration-dependent manner, suggesting it is an important nutrient during infection (PubMed:29531136).</text>
</comment>
<comment type="pathway">
    <text evidence="5">Amine and polyamine degradation; ethanolamine degradation.</text>
</comment>
<comment type="induction">
    <text evidence="5">Part of the 17-gene eut operon transcribed from a single promoter, induced by ethanolamine and adenosylcobalamin (AdoCbl, vitamin B12).</text>
</comment>
<comment type="disruption phenotype">
    <text evidence="1 2">Not required for aerobic growth on ethanolamine (EA) supplemented with cobalamin (vitamin B12). A double eutJ-eutG deletion is not required for growth in the above conditions. A double eutG-eutH deletion is not required for growth in the above conditions. Slightly attenuated in a mouse model of infection (PubMed:10464203). A non-polar deletion mutant grows on EA from pH 5.5 to pH 8.0, but does not grow at pH 8.5, no change in acetaldehyde release on EA plus vitamin B12 (PubMed:16585748).</text>
</comment>
<comment type="similarity">
    <text evidence="7">Belongs to the EutJ family.</text>
</comment>
<proteinExistence type="evidence at transcript level"/>
<protein>
    <recommendedName>
        <fullName>Ethanolamine utilization protein EutJ</fullName>
    </recommendedName>
</protein>
<evidence type="ECO:0000269" key="1">
    <source>
    </source>
</evidence>
<evidence type="ECO:0000269" key="2">
    <source>
    </source>
</evidence>
<evidence type="ECO:0000269" key="3">
    <source>
    </source>
</evidence>
<evidence type="ECO:0000269" key="4">
    <source>
    </source>
</evidence>
<evidence type="ECO:0000269" key="5">
    <source>
    </source>
</evidence>
<evidence type="ECO:0000303" key="6">
    <source>
    </source>
</evidence>
<evidence type="ECO:0000305" key="7"/>
<evidence type="ECO:0000305" key="8">
    <source>
    </source>
</evidence>
<evidence type="ECO:0000305" key="9">
    <source>
    </source>
</evidence>
<organism>
    <name type="scientific">Salmonella typhimurium (strain LT2 / SGSC1412 / ATCC 700720)</name>
    <dbReference type="NCBI Taxonomy" id="99287"/>
    <lineage>
        <taxon>Bacteria</taxon>
        <taxon>Pseudomonadati</taxon>
        <taxon>Pseudomonadota</taxon>
        <taxon>Gammaproteobacteria</taxon>
        <taxon>Enterobacterales</taxon>
        <taxon>Enterobacteriaceae</taxon>
        <taxon>Salmonella</taxon>
    </lineage>
</organism>
<reference key="1">
    <citation type="journal article" date="1995" name="J. Bacteriol.">
        <title>Ethanolamine utilization in Salmonella typhimurium: nucleotide sequence, protein expression, and mutational analysis of the cchA cchB eutE eutJ eutG eutH gene cluster.</title>
        <authorList>
            <person name="Stojiljkovic I."/>
            <person name="Baeumler A.J."/>
            <person name="Heffron F."/>
        </authorList>
    </citation>
    <scope>NUCLEOTIDE SEQUENCE [GENOMIC DNA]</scope>
    <scope>FUNCTION</scope>
    <source>
        <strain>ATCC 14028s / SGSG 2262</strain>
    </source>
</reference>
<reference key="2">
    <citation type="journal article" date="1999" name="J. Bacteriol.">
        <title>The 17-gene ethanolamine (eut) operon of Salmonella typhimurium encodes five homologues of carboxysome shell proteins.</title>
        <authorList>
            <person name="Kofoid E.C."/>
            <person name="Rappleye C.A."/>
            <person name="Stojiljkovic I."/>
            <person name="Roth J.R."/>
        </authorList>
    </citation>
    <scope>NUCLEOTIDE SEQUENCE [GENOMIC DNA]</scope>
    <scope>FUNCTION</scope>
    <scope>DISRUPTION PHENOTYPE</scope>
    <source>
        <strain>LT2</strain>
    </source>
</reference>
<reference key="3">
    <citation type="journal article" date="2001" name="Nature">
        <title>Complete genome sequence of Salmonella enterica serovar Typhimurium LT2.</title>
        <authorList>
            <person name="McClelland M."/>
            <person name="Sanderson K.E."/>
            <person name="Spieth J."/>
            <person name="Clifton S.W."/>
            <person name="Latreille P."/>
            <person name="Courtney L."/>
            <person name="Porwollik S."/>
            <person name="Ali J."/>
            <person name="Dante M."/>
            <person name="Du F."/>
            <person name="Hou S."/>
            <person name="Layman D."/>
            <person name="Leonard S."/>
            <person name="Nguyen C."/>
            <person name="Scott K."/>
            <person name="Holmes A."/>
            <person name="Grewal N."/>
            <person name="Mulvaney E."/>
            <person name="Ryan E."/>
            <person name="Sun H."/>
            <person name="Florea L."/>
            <person name="Miller W."/>
            <person name="Stoneking T."/>
            <person name="Nhan M."/>
            <person name="Waterston R."/>
            <person name="Wilson R.K."/>
        </authorList>
    </citation>
    <scope>NUCLEOTIDE SEQUENCE [LARGE SCALE GENOMIC DNA]</scope>
    <source>
        <strain>LT2 / SGSC1412 / ATCC 700720</strain>
    </source>
</reference>
<reference key="4">
    <citation type="journal article" date="1988" name="J. Bacteriol.">
        <title>Ethanolamine utilization in Salmonella typhimurium.</title>
        <authorList>
            <person name="Roof D.M."/>
            <person name="Roth J.R."/>
        </authorList>
    </citation>
    <scope>FUNCTION</scope>
    <scope>PATHWAY</scope>
    <scope>OPERON</scope>
    <scope>INDUCTION BY ETHANOLAMINE AND COBALAMIN</scope>
    <source>
        <strain>LT2</strain>
    </source>
</reference>
<reference key="5">
    <citation type="journal article" date="2006" name="J. Bacteriol.">
        <title>Conserving a volatile metabolite: a role for carboxysome-like organelles in Salmonella enterica.</title>
        <authorList>
            <person name="Penrod J.T."/>
            <person name="Roth J.R."/>
        </authorList>
    </citation>
    <scope>DISRUPTION PHENOTYPE</scope>
    <source>
        <strain>LT2</strain>
    </source>
</reference>
<reference key="6">
    <citation type="journal article" date="2016" name="Sci. Rep.">
        <title>Engineering formation of multiple recombinant Eut protein nanocompartments in E. coli.</title>
        <authorList>
            <person name="Held M."/>
            <person name="Kolb A."/>
            <person name="Perdue S."/>
            <person name="Hsu S.Y."/>
            <person name="Bloch S.E."/>
            <person name="Quin M.B."/>
            <person name="Schmidt-Dannert C."/>
        </authorList>
    </citation>
    <scope>FUNCTION</scope>
    <source>
        <strain>LT2</strain>
    </source>
</reference>
<reference key="7">
    <citation type="journal article" date="2018" name="Infect. Immun.">
        <title>The Ethanolamine Permease EutH Promotes Vacuole Adaptation of Salmonella enterica and Listeria monocytogenes during Macrophage Infection.</title>
        <authorList>
            <person name="Anderson C.J."/>
            <person name="Satkovich J."/>
            <person name="Koeseoglu V.K."/>
            <person name="Agaisse H."/>
            <person name="Kendall M.M."/>
        </authorList>
    </citation>
    <scope>FUNCTION</scope>
    <source>
        <strain>SL1344</strain>
    </source>
</reference>
<dbReference type="EMBL" id="U18560">
    <property type="protein sequence ID" value="AAA80210.1"/>
    <property type="molecule type" value="Genomic_DNA"/>
</dbReference>
<dbReference type="EMBL" id="AF093749">
    <property type="protein sequence ID" value="AAC78119.1"/>
    <property type="molecule type" value="Genomic_DNA"/>
</dbReference>
<dbReference type="EMBL" id="AE006468">
    <property type="protein sequence ID" value="AAL21356.1"/>
    <property type="molecule type" value="Genomic_DNA"/>
</dbReference>
<dbReference type="RefSeq" id="NP_461397.1">
    <property type="nucleotide sequence ID" value="NC_003197.2"/>
</dbReference>
<dbReference type="RefSeq" id="WP_000929675.1">
    <property type="nucleotide sequence ID" value="NC_003197.2"/>
</dbReference>
<dbReference type="SMR" id="P0A206"/>
<dbReference type="STRING" id="99287.STM2462"/>
<dbReference type="PaxDb" id="99287-STM2462"/>
<dbReference type="DNASU" id="1253984"/>
<dbReference type="GeneID" id="1253984"/>
<dbReference type="KEGG" id="stm:STM2462"/>
<dbReference type="PATRIC" id="fig|99287.12.peg.2600"/>
<dbReference type="HOGENOM" id="CLU_088869_0_0_6"/>
<dbReference type="OMA" id="KPQNPMF"/>
<dbReference type="PhylomeDB" id="P0A206"/>
<dbReference type="BioCyc" id="SENT99287:STM2462-MONOMER"/>
<dbReference type="UniPathway" id="UPA00560"/>
<dbReference type="Proteomes" id="UP000001014">
    <property type="component" value="Chromosome"/>
</dbReference>
<dbReference type="GO" id="GO:0046336">
    <property type="term" value="P:ethanolamine catabolic process"/>
    <property type="evidence" value="ECO:0007669"/>
    <property type="project" value="UniProtKB-UniPathway"/>
</dbReference>
<dbReference type="CDD" id="cd24047">
    <property type="entry name" value="ASKHA_NBD_EutJ"/>
    <property type="match status" value="1"/>
</dbReference>
<dbReference type="Gene3D" id="3.30.420.40">
    <property type="match status" value="2"/>
</dbReference>
<dbReference type="InterPro" id="IPR043129">
    <property type="entry name" value="ATPase_NBD"/>
</dbReference>
<dbReference type="InterPro" id="IPR013366">
    <property type="entry name" value="EutJ"/>
</dbReference>
<dbReference type="InterPro" id="IPR050696">
    <property type="entry name" value="FtsA/MreB"/>
</dbReference>
<dbReference type="NCBIfam" id="TIGR02529">
    <property type="entry name" value="EutJ"/>
    <property type="match status" value="1"/>
</dbReference>
<dbReference type="NCBIfam" id="NF011660">
    <property type="entry name" value="PRK15080.1"/>
    <property type="match status" value="1"/>
</dbReference>
<dbReference type="PANTHER" id="PTHR32432">
    <property type="entry name" value="CELL DIVISION PROTEIN FTSA-RELATED"/>
    <property type="match status" value="1"/>
</dbReference>
<dbReference type="PANTHER" id="PTHR32432:SF3">
    <property type="entry name" value="ETHANOLAMINE UTILIZATION PROTEIN EUTJ"/>
    <property type="match status" value="1"/>
</dbReference>
<dbReference type="Pfam" id="PF14450">
    <property type="entry name" value="FtsA"/>
    <property type="match status" value="1"/>
</dbReference>
<dbReference type="SUPFAM" id="SSF53067">
    <property type="entry name" value="Actin-like ATPase domain"/>
    <property type="match status" value="2"/>
</dbReference>
<accession>P0A206</accession>
<accession>P41794</accession>